<keyword id="KW-0687">Ribonucleoprotein</keyword>
<keyword id="KW-0689">Ribosomal protein</keyword>
<reference key="1">
    <citation type="journal article" date="2006" name="PLoS Biol.">
        <title>The genome of deep-sea vent chemolithoautotroph Thiomicrospira crunogena XCL-2.</title>
        <authorList>
            <person name="Scott K.M."/>
            <person name="Sievert S.M."/>
            <person name="Abril F.N."/>
            <person name="Ball L.A."/>
            <person name="Barrett C.J."/>
            <person name="Blake R.A."/>
            <person name="Boller A.J."/>
            <person name="Chain P.S.G."/>
            <person name="Clark J.A."/>
            <person name="Davis C.R."/>
            <person name="Detter C."/>
            <person name="Do K.F."/>
            <person name="Dobrinski K.P."/>
            <person name="Faza B.I."/>
            <person name="Fitzpatrick K.A."/>
            <person name="Freyermuth S.K."/>
            <person name="Harmer T.L."/>
            <person name="Hauser L.J."/>
            <person name="Huegler M."/>
            <person name="Kerfeld C.A."/>
            <person name="Klotz M.G."/>
            <person name="Kong W.W."/>
            <person name="Land M."/>
            <person name="Lapidus A."/>
            <person name="Larimer F.W."/>
            <person name="Longo D.L."/>
            <person name="Lucas S."/>
            <person name="Malfatti S.A."/>
            <person name="Massey S.E."/>
            <person name="Martin D.D."/>
            <person name="McCuddin Z."/>
            <person name="Meyer F."/>
            <person name="Moore J.L."/>
            <person name="Ocampo L.H. Jr."/>
            <person name="Paul J.H."/>
            <person name="Paulsen I.T."/>
            <person name="Reep D.K."/>
            <person name="Ren Q."/>
            <person name="Ross R.L."/>
            <person name="Sato P.Y."/>
            <person name="Thomas P."/>
            <person name="Tinkham L.E."/>
            <person name="Zeruth G.T."/>
        </authorList>
    </citation>
    <scope>NUCLEOTIDE SEQUENCE [LARGE SCALE GENOMIC DNA]</scope>
    <source>
        <strain>DSM 25203 / XCL-2</strain>
    </source>
</reference>
<protein>
    <recommendedName>
        <fullName evidence="1">Large ribosomal subunit protein bL36</fullName>
    </recommendedName>
    <alternativeName>
        <fullName evidence="2">50S ribosomal protein L36</fullName>
    </alternativeName>
</protein>
<feature type="chain" id="PRO_0000302326" description="Large ribosomal subunit protein bL36">
    <location>
        <begin position="1"/>
        <end position="41"/>
    </location>
</feature>
<name>RL36_HYDCU</name>
<evidence type="ECO:0000255" key="1">
    <source>
        <dbReference type="HAMAP-Rule" id="MF_00251"/>
    </source>
</evidence>
<evidence type="ECO:0000305" key="2"/>
<comment type="similarity">
    <text evidence="1">Belongs to the bacterial ribosomal protein bL36 family.</text>
</comment>
<proteinExistence type="inferred from homology"/>
<sequence length="41" mass="4899">MKILSSLKSAKTRHKDCQVVRRRGKVYVINKTNPRFKARQR</sequence>
<gene>
    <name evidence="1" type="primary">rpmJ</name>
    <name type="ordered locus">Tcr_1270</name>
</gene>
<organism>
    <name type="scientific">Hydrogenovibrio crunogenus (strain DSM 25203 / XCL-2)</name>
    <name type="common">Thiomicrospira crunogena</name>
    <dbReference type="NCBI Taxonomy" id="317025"/>
    <lineage>
        <taxon>Bacteria</taxon>
        <taxon>Pseudomonadati</taxon>
        <taxon>Pseudomonadota</taxon>
        <taxon>Gammaproteobacteria</taxon>
        <taxon>Thiotrichales</taxon>
        <taxon>Piscirickettsiaceae</taxon>
        <taxon>Hydrogenovibrio</taxon>
    </lineage>
</organism>
<accession>Q31G58</accession>
<dbReference type="EMBL" id="CP000109">
    <property type="protein sequence ID" value="ABB41865.1"/>
    <property type="molecule type" value="Genomic_DNA"/>
</dbReference>
<dbReference type="SMR" id="Q31G58"/>
<dbReference type="STRING" id="317025.Tcr_1270"/>
<dbReference type="KEGG" id="tcx:Tcr_1270"/>
<dbReference type="eggNOG" id="COG0257">
    <property type="taxonomic scope" value="Bacteria"/>
</dbReference>
<dbReference type="HOGENOM" id="CLU_135723_3_3_6"/>
<dbReference type="OrthoDB" id="9801558at2"/>
<dbReference type="GO" id="GO:1990904">
    <property type="term" value="C:ribonucleoprotein complex"/>
    <property type="evidence" value="ECO:0007669"/>
    <property type="project" value="UniProtKB-KW"/>
</dbReference>
<dbReference type="GO" id="GO:0005840">
    <property type="term" value="C:ribosome"/>
    <property type="evidence" value="ECO:0007669"/>
    <property type="project" value="UniProtKB-KW"/>
</dbReference>
<dbReference type="GO" id="GO:0003735">
    <property type="term" value="F:structural constituent of ribosome"/>
    <property type="evidence" value="ECO:0007669"/>
    <property type="project" value="InterPro"/>
</dbReference>
<dbReference type="GO" id="GO:0006412">
    <property type="term" value="P:translation"/>
    <property type="evidence" value="ECO:0007669"/>
    <property type="project" value="UniProtKB-UniRule"/>
</dbReference>
<dbReference type="HAMAP" id="MF_00251">
    <property type="entry name" value="Ribosomal_bL36"/>
    <property type="match status" value="1"/>
</dbReference>
<dbReference type="InterPro" id="IPR000473">
    <property type="entry name" value="Ribosomal_bL36"/>
</dbReference>
<dbReference type="InterPro" id="IPR035977">
    <property type="entry name" value="Ribosomal_bL36_sp"/>
</dbReference>
<dbReference type="InterPro" id="IPR047621">
    <property type="entry name" value="Ribosomal_L36_bact"/>
</dbReference>
<dbReference type="NCBIfam" id="NF002021">
    <property type="entry name" value="PRK00831.1"/>
    <property type="match status" value="1"/>
</dbReference>
<dbReference type="NCBIfam" id="TIGR01022">
    <property type="entry name" value="rpmJ_bact"/>
    <property type="match status" value="1"/>
</dbReference>
<dbReference type="PANTHER" id="PTHR47781">
    <property type="entry name" value="50S RIBOSOMAL PROTEIN L36 2"/>
    <property type="match status" value="1"/>
</dbReference>
<dbReference type="PANTHER" id="PTHR47781:SF1">
    <property type="entry name" value="LARGE RIBOSOMAL SUBUNIT PROTEIN BL36B"/>
    <property type="match status" value="1"/>
</dbReference>
<dbReference type="Pfam" id="PF00444">
    <property type="entry name" value="Ribosomal_L36"/>
    <property type="match status" value="1"/>
</dbReference>
<dbReference type="SUPFAM" id="SSF57840">
    <property type="entry name" value="Ribosomal protein L36"/>
    <property type="match status" value="1"/>
</dbReference>
<dbReference type="PROSITE" id="PS00828">
    <property type="entry name" value="RIBOSOMAL_L36"/>
    <property type="match status" value="1"/>
</dbReference>